<proteinExistence type="evidence at transcript level"/>
<keyword id="KW-0150">Chloroplast</keyword>
<keyword id="KW-0249">Electron transport</keyword>
<keyword id="KW-0472">Membrane</keyword>
<keyword id="KW-0602">Photosynthesis</keyword>
<keyword id="KW-0934">Plastid</keyword>
<keyword id="KW-1185">Reference proteome</keyword>
<keyword id="KW-0691">RNA editing</keyword>
<keyword id="KW-0793">Thylakoid</keyword>
<keyword id="KW-0812">Transmembrane</keyword>
<keyword id="KW-1133">Transmembrane helix</keyword>
<keyword id="KW-0813">Transport</keyword>
<evidence type="ECO:0000255" key="1">
    <source>
        <dbReference type="HAMAP-Rule" id="MF_00433"/>
    </source>
</evidence>
<evidence type="ECO:0000269" key="2">
    <source>
    </source>
</evidence>
<dbReference type="EMBL" id="AJ506156">
    <property type="protein sequence ID" value="CAD45124.1"/>
    <property type="status" value="ALT_SEQ"/>
    <property type="molecule type" value="Genomic_DNA"/>
</dbReference>
<dbReference type="EMBL" id="AJ704414">
    <property type="protein sequence ID" value="CAG28626.1"/>
    <property type="molecule type" value="Genomic_DNA"/>
</dbReference>
<dbReference type="RefSeq" id="NP_904117.1">
    <property type="nucleotide sequence ID" value="NC_005086.1"/>
</dbReference>
<dbReference type="SMR" id="Q70XY8"/>
<dbReference type="STRING" id="13333.Q70XY8"/>
<dbReference type="KEGG" id="atr:2597959"/>
<dbReference type="Proteomes" id="UP000017836">
    <property type="component" value="Chloroplast"/>
</dbReference>
<dbReference type="GO" id="GO:0009535">
    <property type="term" value="C:chloroplast thylakoid membrane"/>
    <property type="evidence" value="ECO:0007669"/>
    <property type="project" value="UniProtKB-SubCell"/>
</dbReference>
<dbReference type="GO" id="GO:0009512">
    <property type="term" value="C:cytochrome b6f complex"/>
    <property type="evidence" value="ECO:0007669"/>
    <property type="project" value="InterPro"/>
</dbReference>
<dbReference type="GO" id="GO:0045158">
    <property type="term" value="F:electron transporter, transferring electrons within cytochrome b6/f complex of photosystem II activity"/>
    <property type="evidence" value="ECO:0007669"/>
    <property type="project" value="UniProtKB-UniRule"/>
</dbReference>
<dbReference type="GO" id="GO:0015979">
    <property type="term" value="P:photosynthesis"/>
    <property type="evidence" value="ECO:0007669"/>
    <property type="project" value="UniProtKB-KW"/>
</dbReference>
<dbReference type="HAMAP" id="MF_00433">
    <property type="entry name" value="Cytb6_f_PetL"/>
    <property type="match status" value="1"/>
</dbReference>
<dbReference type="InterPro" id="IPR007802">
    <property type="entry name" value="Cyt_b6/f_cplx_su6"/>
</dbReference>
<dbReference type="PANTHER" id="PTHR37266">
    <property type="entry name" value="CYTOCHROME B6-F COMPLEX SUBUNIT 6"/>
    <property type="match status" value="1"/>
</dbReference>
<dbReference type="PANTHER" id="PTHR37266:SF1">
    <property type="entry name" value="CYTOCHROME B6-F COMPLEX SUBUNIT 6"/>
    <property type="match status" value="1"/>
</dbReference>
<dbReference type="Pfam" id="PF05115">
    <property type="entry name" value="PetL"/>
    <property type="match status" value="1"/>
</dbReference>
<dbReference type="SUPFAM" id="SSF103436">
    <property type="entry name" value="PetL subunit of the cytochrome b6f complex"/>
    <property type="match status" value="1"/>
</dbReference>
<comment type="function">
    <text evidence="1">Component of the cytochrome b6-f complex, which mediates electron transfer between photosystem II (PSII) and photosystem I (PSI), cyclic electron flow around PSI, and state transitions. PetL is important for photoautotrophic growth as well as for electron transfer efficiency and stability of the cytochrome b6-f complex.</text>
</comment>
<comment type="subunit">
    <text evidence="1">The 4 large subunits of the cytochrome b6-f complex are cytochrome b6, subunit IV (17 kDa polypeptide, PetD), cytochrome f and the Rieske protein, while the 4 small subunits are PetG, PetL, PetM and PetN. The complex functions as a dimer.</text>
</comment>
<comment type="subcellular location">
    <subcellularLocation>
        <location evidence="1">Plastid</location>
        <location evidence="1">Chloroplast thylakoid membrane</location>
        <topology evidence="1">Single-pass membrane protein</topology>
    </subcellularLocation>
</comment>
<comment type="RNA editing">
    <location>
        <position position="2" evidence="2"/>
    </location>
    <location>
        <position position="8" evidence="2"/>
    </location>
    <location>
        <position position="15" evidence="2"/>
    </location>
</comment>
<comment type="similarity">
    <text evidence="1">Belongs to the PetL family.</text>
</comment>
<reference key="1">
    <citation type="journal article" date="2003" name="Mol. Biol. Evol.">
        <title>Analysis of the Amborella trichopoda chloroplast genome sequence suggests that Amborella is not a basal angiosperm.</title>
        <authorList>
            <person name="Goremykin V.V."/>
            <person name="Hirsch-Ernst K.I."/>
            <person name="Wolfl S."/>
            <person name="Hellwig F.H."/>
        </authorList>
    </citation>
    <scope>NUCLEOTIDE SEQUENCE [LARGE SCALE GENOMIC DNA]</scope>
</reference>
<reference key="2">
    <citation type="journal article" date="2004" name="Nucleic Acids Res.">
        <title>Rapid evolution of RNA editing sites in a small non-essential plastid gene.</title>
        <authorList>
            <person name="Fiebig A."/>
            <person name="Stegemann S."/>
            <person name="Bock R."/>
        </authorList>
    </citation>
    <scope>NUCLEOTIDE SEQUENCE [GENOMIC DNA]</scope>
    <scope>RNA EDITING</scope>
    <source>
        <tissue>Leaf</tissue>
    </source>
</reference>
<gene>
    <name evidence="1" type="primary">petL</name>
</gene>
<sequence length="31" mass="3382">MLTITSYFGFLLAALTITSALLIGLNKIRLI</sequence>
<feature type="chain" id="PRO_0000220435" description="Cytochrome b6-f complex subunit 6">
    <location>
        <begin position="1"/>
        <end position="31"/>
    </location>
</feature>
<feature type="transmembrane region" description="Helical" evidence="1">
    <location>
        <begin position="4"/>
        <end position="26"/>
    </location>
</feature>
<protein>
    <recommendedName>
        <fullName evidence="1">Cytochrome b6-f complex subunit 6</fullName>
    </recommendedName>
    <alternativeName>
        <fullName evidence="1">Cytochrome b6-f complex subunit PetL</fullName>
    </alternativeName>
    <alternativeName>
        <fullName evidence="1">Cytochrome b6-f complex subunit VI</fullName>
    </alternativeName>
</protein>
<organism>
    <name type="scientific">Amborella trichopoda</name>
    <dbReference type="NCBI Taxonomy" id="13333"/>
    <lineage>
        <taxon>Eukaryota</taxon>
        <taxon>Viridiplantae</taxon>
        <taxon>Streptophyta</taxon>
        <taxon>Embryophyta</taxon>
        <taxon>Tracheophyta</taxon>
        <taxon>Spermatophyta</taxon>
        <taxon>Magnoliopsida</taxon>
        <taxon>Amborellales</taxon>
        <taxon>Amborellaceae</taxon>
        <taxon>Amborella</taxon>
    </lineage>
</organism>
<accession>Q70XY8</accession>
<accession>Q5K3V0</accession>
<geneLocation type="chloroplast"/>
<name>PETL_AMBTC</name>